<proteinExistence type="evidence at protein level"/>
<sequence length="193" mass="21083">MLGVVELLLLGAAWLAGPARGQNETEPIVLEGKCLVVCDSNPTSDPTGTALGISVRSGSAKVAFSAIRSTNHEPSEMSNRTMIIYFDQVLVNIGNNFDSERSTFIAPRKGIYSFNFHVVKVYNRQTIQVSLMLNGWPVISAFAGDQDVTREAASNGVLIQMEKGDRAYLKLERGNLMGGWKYSTFSGFLVFPL</sequence>
<keyword id="KW-1003">Cell membrane</keyword>
<keyword id="KW-1015">Disulfide bond</keyword>
<keyword id="KW-0325">Glycoprotein</keyword>
<keyword id="KW-0472">Membrane</keyword>
<keyword id="KW-0628">Postsynaptic cell membrane</keyword>
<keyword id="KW-1185">Reference proteome</keyword>
<keyword id="KW-0964">Secreted</keyword>
<keyword id="KW-0730">Sialic acid</keyword>
<keyword id="KW-0732">Signal</keyword>
<keyword id="KW-0770">Synapse</keyword>
<accession>P86437</accession>
<name>CBLN1_BOVIN</name>
<reference evidence="9" key="1">
    <citation type="journal article" date="2009" name="Science">
        <title>The genome sequence of taurine cattle: a window to ruminant biology and evolution.</title>
        <authorList>
            <consortium name="The bovine genome sequencing and analysis consortium"/>
        </authorList>
    </citation>
    <scope>NUCLEOTIDE SEQUENCE [LARGE SCALE GENOMIC DNA]</scope>
    <source>
        <strain evidence="6">Hereford</strain>
    </source>
</reference>
<reference evidence="9" key="2">
    <citation type="submission" date="2010-01" db="UniProtKB">
        <title>Neuropeptidomics of the bovine hypothalamus.</title>
        <authorList>
            <person name="Colgrave M."/>
        </authorList>
    </citation>
    <scope>IDENTIFICATION BY MASS SPECTROMETRY</scope>
</reference>
<feature type="signal peptide" evidence="4">
    <location>
        <begin position="1"/>
        <end position="21"/>
    </location>
</feature>
<feature type="chain" id="PRO_0000391791" description="Cerebellin-1" evidence="4">
    <location>
        <begin position="22"/>
        <end position="193"/>
    </location>
</feature>
<feature type="peptide" id="PRO_0000391792" description="Cerebellin" evidence="7">
    <location>
        <begin position="57"/>
        <end position="72"/>
    </location>
</feature>
<feature type="peptide" id="PRO_0000391793" description="[des-Ser1]-cerebellin" evidence="4">
    <location>
        <begin position="58"/>
        <end position="72"/>
    </location>
</feature>
<feature type="domain" description="C1q" evidence="5">
    <location>
        <begin position="57"/>
        <end position="193"/>
    </location>
</feature>
<feature type="region of interest" description="Essential for interaction with NRXN1 and linker of two C1q trimers into disulfide-linked hexamers" evidence="1">
    <location>
        <begin position="34"/>
        <end position="38"/>
    </location>
</feature>
<feature type="region of interest" description="Necessary for interaction with CBLN3, and homotrimerization" evidence="3">
    <location>
        <begin position="62"/>
        <end position="193"/>
    </location>
</feature>
<feature type="region of interest" description="Essential for interaction with GRID2" evidence="1">
    <location>
        <begin position="122"/>
        <end position="147"/>
    </location>
</feature>
<feature type="glycosylation site" description="N-linked (GlcNAc...) asparagine" evidence="4">
    <location>
        <position position="23"/>
    </location>
</feature>
<feature type="glycosylation site" description="N-linked (GlcNAc...) asparagine" evidence="4">
    <location>
        <position position="79"/>
    </location>
</feature>
<feature type="disulfide bond" description="Interchain" evidence="3">
    <location>
        <position position="34"/>
    </location>
</feature>
<feature type="disulfide bond" description="Interchain" evidence="3">
    <location>
        <position position="38"/>
    </location>
</feature>
<dbReference type="EMBL" id="AAFC03072883">
    <property type="status" value="NOT_ANNOTATED_CDS"/>
    <property type="molecule type" value="Genomic_DNA"/>
</dbReference>
<dbReference type="RefSeq" id="NP_001181981.1">
    <property type="nucleotide sequence ID" value="NM_001195052.1"/>
</dbReference>
<dbReference type="SMR" id="P86437"/>
<dbReference type="FunCoup" id="P86437">
    <property type="interactions" value="614"/>
</dbReference>
<dbReference type="STRING" id="9913.ENSBTAP00000020212"/>
<dbReference type="GlyCosmos" id="P86437">
    <property type="glycosylation" value="2 sites, No reported glycans"/>
</dbReference>
<dbReference type="GlyGen" id="P86437">
    <property type="glycosylation" value="2 sites"/>
</dbReference>
<dbReference type="PaxDb" id="9913-ENSBTAP00000020212"/>
<dbReference type="Ensembl" id="ENSBTAT00000020212.7">
    <property type="protein sequence ID" value="ENSBTAP00000020212.5"/>
    <property type="gene ID" value="ENSBTAG00000015194.7"/>
</dbReference>
<dbReference type="GeneID" id="618604"/>
<dbReference type="KEGG" id="bta:618604"/>
<dbReference type="CTD" id="869"/>
<dbReference type="VEuPathDB" id="HostDB:ENSBTAG00000015194"/>
<dbReference type="VGNC" id="VGNC:26811">
    <property type="gene designation" value="CBLN1"/>
</dbReference>
<dbReference type="eggNOG" id="ENOG502QVN9">
    <property type="taxonomic scope" value="Eukaryota"/>
</dbReference>
<dbReference type="GeneTree" id="ENSGT00940000159811"/>
<dbReference type="HOGENOM" id="CLU_001074_8_2_1"/>
<dbReference type="InParanoid" id="P86437"/>
<dbReference type="OMA" id="AWLACGQ"/>
<dbReference type="OrthoDB" id="10070467at2759"/>
<dbReference type="TreeFam" id="TF329591"/>
<dbReference type="Proteomes" id="UP000009136">
    <property type="component" value="Chromosome 18"/>
</dbReference>
<dbReference type="Bgee" id="ENSBTAG00000015194">
    <property type="expression patterns" value="Expressed in prefrontal cortex and 26 other cell types or tissues"/>
</dbReference>
<dbReference type="GO" id="GO:0005576">
    <property type="term" value="C:extracellular region"/>
    <property type="evidence" value="ECO:0000250"/>
    <property type="project" value="UniProtKB"/>
</dbReference>
<dbReference type="GO" id="GO:0098978">
    <property type="term" value="C:glutamatergic synapse"/>
    <property type="evidence" value="ECO:0000318"/>
    <property type="project" value="GO_Central"/>
</dbReference>
<dbReference type="GO" id="GO:0098688">
    <property type="term" value="C:parallel fiber to Purkinje cell synapse"/>
    <property type="evidence" value="ECO:0007669"/>
    <property type="project" value="Ensembl"/>
</dbReference>
<dbReference type="GO" id="GO:0045211">
    <property type="term" value="C:postsynaptic membrane"/>
    <property type="evidence" value="ECO:0000250"/>
    <property type="project" value="UniProtKB"/>
</dbReference>
<dbReference type="GO" id="GO:0043083">
    <property type="term" value="C:synaptic cleft"/>
    <property type="evidence" value="ECO:0000318"/>
    <property type="project" value="GO_Central"/>
</dbReference>
<dbReference type="GO" id="GO:0098820">
    <property type="term" value="C:trans-synaptic protein complex"/>
    <property type="evidence" value="ECO:0007669"/>
    <property type="project" value="Ensembl"/>
</dbReference>
<dbReference type="GO" id="GO:0042802">
    <property type="term" value="F:identical protein binding"/>
    <property type="evidence" value="ECO:0007669"/>
    <property type="project" value="Ensembl"/>
</dbReference>
<dbReference type="GO" id="GO:0021707">
    <property type="term" value="P:cerebellar granule cell differentiation"/>
    <property type="evidence" value="ECO:0007669"/>
    <property type="project" value="Ensembl"/>
</dbReference>
<dbReference type="GO" id="GO:0051649">
    <property type="term" value="P:establishment of localization in cell"/>
    <property type="evidence" value="ECO:0007669"/>
    <property type="project" value="Ensembl"/>
</dbReference>
<dbReference type="GO" id="GO:0007157">
    <property type="term" value="P:heterophilic cell-cell adhesion via plasma membrane cell adhesion molecules"/>
    <property type="evidence" value="ECO:0007669"/>
    <property type="project" value="Ensembl"/>
</dbReference>
<dbReference type="GO" id="GO:0099558">
    <property type="term" value="P:maintenance of synapse structure"/>
    <property type="evidence" value="ECO:0000250"/>
    <property type="project" value="UniProtKB"/>
</dbReference>
<dbReference type="GO" id="GO:0090394">
    <property type="term" value="P:negative regulation of excitatory postsynaptic potential"/>
    <property type="evidence" value="ECO:0007669"/>
    <property type="project" value="Ensembl"/>
</dbReference>
<dbReference type="GO" id="GO:1905703">
    <property type="term" value="P:negative regulation of inhibitory synapse assembly"/>
    <property type="evidence" value="ECO:0000250"/>
    <property type="project" value="UniProtKB"/>
</dbReference>
<dbReference type="GO" id="GO:1900454">
    <property type="term" value="P:positive regulation of long-term synaptic depression"/>
    <property type="evidence" value="ECO:0007669"/>
    <property type="project" value="Ensembl"/>
</dbReference>
<dbReference type="GO" id="GO:0051965">
    <property type="term" value="P:positive regulation of synapse assembly"/>
    <property type="evidence" value="ECO:0007669"/>
    <property type="project" value="Ensembl"/>
</dbReference>
<dbReference type="GO" id="GO:0009306">
    <property type="term" value="P:protein secretion"/>
    <property type="evidence" value="ECO:0007669"/>
    <property type="project" value="Ensembl"/>
</dbReference>
<dbReference type="GO" id="GO:0099151">
    <property type="term" value="P:regulation of postsynaptic density assembly"/>
    <property type="evidence" value="ECO:0007669"/>
    <property type="project" value="Ensembl"/>
</dbReference>
<dbReference type="GO" id="GO:1905606">
    <property type="term" value="P:regulation of presynapse assembly"/>
    <property type="evidence" value="ECO:0007669"/>
    <property type="project" value="Ensembl"/>
</dbReference>
<dbReference type="GO" id="GO:0007416">
    <property type="term" value="P:synapse assembly"/>
    <property type="evidence" value="ECO:0007669"/>
    <property type="project" value="Ensembl"/>
</dbReference>
<dbReference type="GO" id="GO:0050808">
    <property type="term" value="P:synapse organization"/>
    <property type="evidence" value="ECO:0000250"/>
    <property type="project" value="UniProtKB"/>
</dbReference>
<dbReference type="GO" id="GO:0099550">
    <property type="term" value="P:trans-synaptic signaling, modulating synaptic transmission"/>
    <property type="evidence" value="ECO:0007669"/>
    <property type="project" value="Ensembl"/>
</dbReference>
<dbReference type="FunFam" id="2.60.120.40:FF:000002">
    <property type="entry name" value="Cerebellin 4"/>
    <property type="match status" value="1"/>
</dbReference>
<dbReference type="Gene3D" id="2.60.120.40">
    <property type="match status" value="1"/>
</dbReference>
<dbReference type="InterPro" id="IPR001073">
    <property type="entry name" value="C1q_dom"/>
</dbReference>
<dbReference type="InterPro" id="IPR050822">
    <property type="entry name" value="Cerebellin_Synaptic_Org"/>
</dbReference>
<dbReference type="InterPro" id="IPR008983">
    <property type="entry name" value="Tumour_necrosis_fac-like_dom"/>
</dbReference>
<dbReference type="PANTHER" id="PTHR22923:SF5">
    <property type="entry name" value="CEREBELLIN-1"/>
    <property type="match status" value="1"/>
</dbReference>
<dbReference type="PANTHER" id="PTHR22923">
    <property type="entry name" value="CEREBELLIN-RELATED"/>
    <property type="match status" value="1"/>
</dbReference>
<dbReference type="Pfam" id="PF00386">
    <property type="entry name" value="C1q"/>
    <property type="match status" value="1"/>
</dbReference>
<dbReference type="PRINTS" id="PR00007">
    <property type="entry name" value="COMPLEMNTC1Q"/>
</dbReference>
<dbReference type="SMART" id="SM00110">
    <property type="entry name" value="C1Q"/>
    <property type="match status" value="1"/>
</dbReference>
<dbReference type="SUPFAM" id="SSF49842">
    <property type="entry name" value="TNF-like"/>
    <property type="match status" value="1"/>
</dbReference>
<dbReference type="PROSITE" id="PS50871">
    <property type="entry name" value="C1Q"/>
    <property type="match status" value="1"/>
</dbReference>
<gene>
    <name evidence="3" type="primary">CBLN1</name>
</gene>
<organism>
    <name type="scientific">Bos taurus</name>
    <name type="common">Bovine</name>
    <dbReference type="NCBI Taxonomy" id="9913"/>
    <lineage>
        <taxon>Eukaryota</taxon>
        <taxon>Metazoa</taxon>
        <taxon>Chordata</taxon>
        <taxon>Craniata</taxon>
        <taxon>Vertebrata</taxon>
        <taxon>Euteleostomi</taxon>
        <taxon>Mammalia</taxon>
        <taxon>Eutheria</taxon>
        <taxon>Laurasiatheria</taxon>
        <taxon>Artiodactyla</taxon>
        <taxon>Ruminantia</taxon>
        <taxon>Pecora</taxon>
        <taxon>Bovidae</taxon>
        <taxon>Bovinae</taxon>
        <taxon>Bos</taxon>
    </lineage>
</organism>
<comment type="function">
    <text evidence="1 3">Required for synapse integrity and synaptic plasticity. During cerebellar synapse formation, essential for the matching and maintenance of pre- and post-synaptic elements at parallel fiber-Purkinje cell synapses, the establishment of the proper pattern of climbing fiber-Purkinje cell innervation, and induction of long-term depression at parallel fiber-Purkinje cell synapses. Plays a role as a synaptic organizer that acts bidirectionally on both pre- and post-synaptic components. On the one hand induces accumulation of synaptic vesicles in the pre-synaptic part by binding with NRXN1 and in other hand induces clustering of GRID2 and its associated proteins at the post-synaptic site through association of GRID2. NRXN1-CBLN1-GRID2 complex directly induces parallel fiber protrusions that encapsulate spines of Purkinje cells leading to accumulation of GRID2 and synaptic vesicles. Required for CBLN3 export from the endoplasmic reticulum and secretion (By similarity). NRXN1-CBLN1-GRID2 complex mediates the D-Serine-dependent long term depression signals and AMPA receptor endocytosis (By similarity). Essential for long-term maintenance but not establishment of excitatory synapses (By similarity). Inhibits the formation and function of inhibitory GABAergic synapses in cerebellar Purkinje cells (By similarity).</text>
</comment>
<comment type="function">
    <text evidence="2">The cerebellin peptide exerts neuromodulatory functions. Directly stimulates norepinephrine release via the adenylate cyclase/PKA-dependent signaling pathway; and indirectly enhances adrenocortical secretion in vivo, through a paracrine mechanism involving medullary catecholamine release (By similarity).</text>
</comment>
<comment type="subunit">
    <text evidence="1 3">Homohexamer; disulfide-linked homotrimers. The trimers are assembled via the globular C1q domains. The trimers associate via N-terminal cysteine residues to form disulfide-linked hexamers. May form oligomers with CBLN2, CBLN3 and CBLN4 prior to secretion. Once secreted, does not interact with other CBLN family members. Interacts with GRID1. Interacts with NRXN1 and NRXN2 long (alpha) and short (beta) isoforms produced by alternative promoter usage. Competes with NLGN1 for NRXN1-binding. Weakly interacts with NRXN3 short isoform and not at all with NRXN3 long isoform (By similarity). Interacts (via C1q domain) with GRID2; GRID2-binding is calcium-independent; CBLN1 hexamers anchor GRID2 N-terminal domain dimers to monomeric NRXN1 isoform beta; promotes synaptogenesis and mediates the D-Serine-dependent long term depression signals and AMPA receptor endocytosis (By similarity).</text>
</comment>
<comment type="subcellular location">
    <subcellularLocation>
        <location evidence="3">Secreted</location>
    </subcellularLocation>
    <subcellularLocation>
        <location evidence="3">Postsynaptic cell membrane</location>
    </subcellularLocation>
</comment>
<comment type="PTM">
    <text evidence="1">The proteolytic processing to yield cerebellin seems to occur either prior to the secretion by presynaptic neurons and subsequent oligomerization or in some other location after release of the mature protein.</text>
</comment>
<comment type="PTM">
    <text evidence="3">Sialoglycoprotein.</text>
</comment>
<comment type="mass spectrometry" mass="1631.85" error="0.16" method="Electrospray" evidence="7">
    <molecule>Cerebellin</molecule>
</comment>
<evidence type="ECO:0000250" key="1">
    <source>
        <dbReference type="UniProtKB" id="P23435"/>
    </source>
</evidence>
<evidence type="ECO:0000250" key="2">
    <source>
        <dbReference type="UniProtKB" id="P63182"/>
    </source>
</evidence>
<evidence type="ECO:0000250" key="3">
    <source>
        <dbReference type="UniProtKB" id="Q9R171"/>
    </source>
</evidence>
<evidence type="ECO:0000255" key="4"/>
<evidence type="ECO:0000255" key="5">
    <source>
        <dbReference type="PROSITE-ProRule" id="PRU00368"/>
    </source>
</evidence>
<evidence type="ECO:0000269" key="6">
    <source>
    </source>
</evidence>
<evidence type="ECO:0000269" key="7">
    <source ref="2"/>
</evidence>
<evidence type="ECO:0000303" key="8">
    <source ref="2"/>
</evidence>
<evidence type="ECO:0000305" key="9"/>
<protein>
    <recommendedName>
        <fullName evidence="3">Cerebellin-1</fullName>
    </recommendedName>
    <alternativeName>
        <fullName evidence="3">Precerebellin</fullName>
    </alternativeName>
    <component>
        <recommendedName>
            <fullName evidence="8">Cerebellin</fullName>
            <shortName evidence="3">CER</shortName>
        </recommendedName>
    </component>
    <component>
        <recommendedName>
            <fullName>[des-Ser1]-cerebellin</fullName>
        </recommendedName>
    </component>
</protein>